<accession>A6KZ38</accession>
<name>SYC_PHOV8</name>
<dbReference type="EC" id="6.1.1.16" evidence="1"/>
<dbReference type="EMBL" id="CP000139">
    <property type="protein sequence ID" value="ABR38702.1"/>
    <property type="molecule type" value="Genomic_DNA"/>
</dbReference>
<dbReference type="RefSeq" id="WP_011965001.1">
    <property type="nucleotide sequence ID" value="NC_009614.1"/>
</dbReference>
<dbReference type="SMR" id="A6KZ38"/>
<dbReference type="STRING" id="435590.BVU_1009"/>
<dbReference type="PaxDb" id="435590-BVU_1009"/>
<dbReference type="GeneID" id="5301976"/>
<dbReference type="KEGG" id="bvu:BVU_1009"/>
<dbReference type="PATRIC" id="fig|435590.9.peg.1042"/>
<dbReference type="eggNOG" id="COG0215">
    <property type="taxonomic scope" value="Bacteria"/>
</dbReference>
<dbReference type="HOGENOM" id="CLU_013528_0_1_10"/>
<dbReference type="BioCyc" id="BVUL435590:G1G59-1054-MONOMER"/>
<dbReference type="Proteomes" id="UP000002861">
    <property type="component" value="Chromosome"/>
</dbReference>
<dbReference type="GO" id="GO:0005829">
    <property type="term" value="C:cytosol"/>
    <property type="evidence" value="ECO:0007669"/>
    <property type="project" value="TreeGrafter"/>
</dbReference>
<dbReference type="GO" id="GO:0005524">
    <property type="term" value="F:ATP binding"/>
    <property type="evidence" value="ECO:0007669"/>
    <property type="project" value="UniProtKB-UniRule"/>
</dbReference>
<dbReference type="GO" id="GO:0004817">
    <property type="term" value="F:cysteine-tRNA ligase activity"/>
    <property type="evidence" value="ECO:0007669"/>
    <property type="project" value="UniProtKB-UniRule"/>
</dbReference>
<dbReference type="GO" id="GO:0008270">
    <property type="term" value="F:zinc ion binding"/>
    <property type="evidence" value="ECO:0007669"/>
    <property type="project" value="UniProtKB-UniRule"/>
</dbReference>
<dbReference type="GO" id="GO:0006423">
    <property type="term" value="P:cysteinyl-tRNA aminoacylation"/>
    <property type="evidence" value="ECO:0007669"/>
    <property type="project" value="UniProtKB-UniRule"/>
</dbReference>
<dbReference type="CDD" id="cd00672">
    <property type="entry name" value="CysRS_core"/>
    <property type="match status" value="1"/>
</dbReference>
<dbReference type="FunFam" id="3.40.50.620:FF:000140">
    <property type="entry name" value="Cysteine--tRNA ligase"/>
    <property type="match status" value="1"/>
</dbReference>
<dbReference type="Gene3D" id="1.20.120.1910">
    <property type="entry name" value="Cysteine-tRNA ligase, C-terminal anti-codon recognition domain"/>
    <property type="match status" value="1"/>
</dbReference>
<dbReference type="Gene3D" id="3.40.50.620">
    <property type="entry name" value="HUPs"/>
    <property type="match status" value="1"/>
</dbReference>
<dbReference type="HAMAP" id="MF_00041">
    <property type="entry name" value="Cys_tRNA_synth"/>
    <property type="match status" value="1"/>
</dbReference>
<dbReference type="InterPro" id="IPR015803">
    <property type="entry name" value="Cys-tRNA-ligase"/>
</dbReference>
<dbReference type="InterPro" id="IPR015273">
    <property type="entry name" value="Cys-tRNA-synt_Ia_DALR"/>
</dbReference>
<dbReference type="InterPro" id="IPR024909">
    <property type="entry name" value="Cys-tRNA/MSH_ligase"/>
</dbReference>
<dbReference type="InterPro" id="IPR056411">
    <property type="entry name" value="CysS_C"/>
</dbReference>
<dbReference type="InterPro" id="IPR014729">
    <property type="entry name" value="Rossmann-like_a/b/a_fold"/>
</dbReference>
<dbReference type="InterPro" id="IPR032678">
    <property type="entry name" value="tRNA-synt_1_cat_dom"/>
</dbReference>
<dbReference type="InterPro" id="IPR009080">
    <property type="entry name" value="tRNAsynth_Ia_anticodon-bd"/>
</dbReference>
<dbReference type="NCBIfam" id="TIGR00435">
    <property type="entry name" value="cysS"/>
    <property type="match status" value="1"/>
</dbReference>
<dbReference type="PANTHER" id="PTHR10890:SF3">
    <property type="entry name" value="CYSTEINE--TRNA LIGASE, CYTOPLASMIC"/>
    <property type="match status" value="1"/>
</dbReference>
<dbReference type="PANTHER" id="PTHR10890">
    <property type="entry name" value="CYSTEINYL-TRNA SYNTHETASE"/>
    <property type="match status" value="1"/>
</dbReference>
<dbReference type="Pfam" id="PF23493">
    <property type="entry name" value="CysS_C"/>
    <property type="match status" value="1"/>
</dbReference>
<dbReference type="Pfam" id="PF09190">
    <property type="entry name" value="DALR_2"/>
    <property type="match status" value="1"/>
</dbReference>
<dbReference type="Pfam" id="PF01406">
    <property type="entry name" value="tRNA-synt_1e"/>
    <property type="match status" value="1"/>
</dbReference>
<dbReference type="PRINTS" id="PR00983">
    <property type="entry name" value="TRNASYNTHCYS"/>
</dbReference>
<dbReference type="SMART" id="SM00840">
    <property type="entry name" value="DALR_2"/>
    <property type="match status" value="1"/>
</dbReference>
<dbReference type="SUPFAM" id="SSF47323">
    <property type="entry name" value="Anticodon-binding domain of a subclass of class I aminoacyl-tRNA synthetases"/>
    <property type="match status" value="1"/>
</dbReference>
<dbReference type="SUPFAM" id="SSF52374">
    <property type="entry name" value="Nucleotidylyl transferase"/>
    <property type="match status" value="1"/>
</dbReference>
<feature type="chain" id="PRO_0000332791" description="Cysteine--tRNA ligase">
    <location>
        <begin position="1"/>
        <end position="493"/>
    </location>
</feature>
<feature type="short sequence motif" description="'HIGH' region">
    <location>
        <begin position="33"/>
        <end position="43"/>
    </location>
</feature>
<feature type="short sequence motif" description="'KMSKS' region">
    <location>
        <begin position="283"/>
        <end position="287"/>
    </location>
</feature>
<feature type="binding site" evidence="1">
    <location>
        <position position="31"/>
    </location>
    <ligand>
        <name>Zn(2+)</name>
        <dbReference type="ChEBI" id="CHEBI:29105"/>
    </ligand>
</feature>
<feature type="binding site" evidence="1">
    <location>
        <position position="226"/>
    </location>
    <ligand>
        <name>Zn(2+)</name>
        <dbReference type="ChEBI" id="CHEBI:29105"/>
    </ligand>
</feature>
<feature type="binding site" evidence="1">
    <location>
        <position position="251"/>
    </location>
    <ligand>
        <name>Zn(2+)</name>
        <dbReference type="ChEBI" id="CHEBI:29105"/>
    </ligand>
</feature>
<feature type="binding site" evidence="1">
    <location>
        <position position="255"/>
    </location>
    <ligand>
        <name>Zn(2+)</name>
        <dbReference type="ChEBI" id="CHEBI:29105"/>
    </ligand>
</feature>
<feature type="binding site" evidence="1">
    <location>
        <position position="286"/>
    </location>
    <ligand>
        <name>ATP</name>
        <dbReference type="ChEBI" id="CHEBI:30616"/>
    </ligand>
</feature>
<proteinExistence type="inferred from homology"/>
<protein>
    <recommendedName>
        <fullName evidence="1">Cysteine--tRNA ligase</fullName>
        <ecNumber evidence="1">6.1.1.16</ecNumber>
    </recommendedName>
    <alternativeName>
        <fullName evidence="1">Cysteinyl-tRNA synthetase</fullName>
        <shortName evidence="1">CysRS</shortName>
    </alternativeName>
</protein>
<organism>
    <name type="scientific">Phocaeicola vulgatus (strain ATCC 8482 / DSM 1447 / JCM 5826 / CCUG 4940 / NBRC 14291 / NCTC 11154)</name>
    <name type="common">Bacteroides vulgatus</name>
    <dbReference type="NCBI Taxonomy" id="435590"/>
    <lineage>
        <taxon>Bacteria</taxon>
        <taxon>Pseudomonadati</taxon>
        <taxon>Bacteroidota</taxon>
        <taxon>Bacteroidia</taxon>
        <taxon>Bacteroidales</taxon>
        <taxon>Bacteroidaceae</taxon>
        <taxon>Phocaeicola</taxon>
    </lineage>
</organism>
<keyword id="KW-0030">Aminoacyl-tRNA synthetase</keyword>
<keyword id="KW-0067">ATP-binding</keyword>
<keyword id="KW-0963">Cytoplasm</keyword>
<keyword id="KW-0436">Ligase</keyword>
<keyword id="KW-0479">Metal-binding</keyword>
<keyword id="KW-0547">Nucleotide-binding</keyword>
<keyword id="KW-0648">Protein biosynthesis</keyword>
<keyword id="KW-0862">Zinc</keyword>
<sequence length="493" mass="56316">MENKLTIYNTLSRQKELFVPLHAPHVGMYVCGPTVYGDAHLGHARPAITFDILFRYLTHLGYKVRYVRNITDVGHLEHDADEGEDKIAKKARLEQLEPMEVVQYYLNRYHKAMEALNVLPPSIEPHASGHIIEQIELVEEILKNGYAYESEGSVYFDVAKYNKDHHYGKLSGRNLDDVLNTTRELDGQSEKRNPADFALWKCAQPEHIMRWPSPWSNGFPGWHCECTAMGKKYLGEHFDIHGGGMDLIFPHHECEIAQSVASQGDDMVHYWMHNNMITINGQKMGKSYGNFINLDEFFHGTHKLLTQAYSPMTIRFFILQAHYRSTVDFSNEALQAAEKGLERLTEAVKGLERITPATQTTGIEGVKDLREKCYTAMNDDLNSPIVIAHLFDGARMINTVLDKKATISAEDLEELKSMFHLFMYEILGLKEEAANNEAHEEAYGKVVDMLLEQRMKAKANKDWATSDKIRDELAALGFEVKDTKDGFTWKLNK</sequence>
<comment type="catalytic activity">
    <reaction evidence="1">
        <text>tRNA(Cys) + L-cysteine + ATP = L-cysteinyl-tRNA(Cys) + AMP + diphosphate</text>
        <dbReference type="Rhea" id="RHEA:17773"/>
        <dbReference type="Rhea" id="RHEA-COMP:9661"/>
        <dbReference type="Rhea" id="RHEA-COMP:9679"/>
        <dbReference type="ChEBI" id="CHEBI:30616"/>
        <dbReference type="ChEBI" id="CHEBI:33019"/>
        <dbReference type="ChEBI" id="CHEBI:35235"/>
        <dbReference type="ChEBI" id="CHEBI:78442"/>
        <dbReference type="ChEBI" id="CHEBI:78517"/>
        <dbReference type="ChEBI" id="CHEBI:456215"/>
        <dbReference type="EC" id="6.1.1.16"/>
    </reaction>
</comment>
<comment type="cofactor">
    <cofactor evidence="1">
        <name>Zn(2+)</name>
        <dbReference type="ChEBI" id="CHEBI:29105"/>
    </cofactor>
    <text evidence="1">Binds 1 zinc ion per subunit.</text>
</comment>
<comment type="subunit">
    <text evidence="1">Monomer.</text>
</comment>
<comment type="subcellular location">
    <subcellularLocation>
        <location evidence="1">Cytoplasm</location>
    </subcellularLocation>
</comment>
<comment type="similarity">
    <text evidence="1">Belongs to the class-I aminoacyl-tRNA synthetase family.</text>
</comment>
<gene>
    <name evidence="1" type="primary">cysS</name>
    <name type="ordered locus">BVU_1009</name>
</gene>
<reference key="1">
    <citation type="journal article" date="2007" name="PLoS Biol.">
        <title>Evolution of symbiotic bacteria in the distal human intestine.</title>
        <authorList>
            <person name="Xu J."/>
            <person name="Mahowald M.A."/>
            <person name="Ley R.E."/>
            <person name="Lozupone C.A."/>
            <person name="Hamady M."/>
            <person name="Martens E.C."/>
            <person name="Henrissat B."/>
            <person name="Coutinho P.M."/>
            <person name="Minx P."/>
            <person name="Latreille P."/>
            <person name="Cordum H."/>
            <person name="Van Brunt A."/>
            <person name="Kim K."/>
            <person name="Fulton R.S."/>
            <person name="Fulton L.A."/>
            <person name="Clifton S.W."/>
            <person name="Wilson R.K."/>
            <person name="Knight R.D."/>
            <person name="Gordon J.I."/>
        </authorList>
    </citation>
    <scope>NUCLEOTIDE SEQUENCE [LARGE SCALE GENOMIC DNA]</scope>
    <source>
        <strain>ATCC 8482 / DSM 1447 / JCM 5826 / CCUG 4940 / NBRC 14291 / NCTC 11154</strain>
    </source>
</reference>
<evidence type="ECO:0000255" key="1">
    <source>
        <dbReference type="HAMAP-Rule" id="MF_00041"/>
    </source>
</evidence>